<reference key="1">
    <citation type="journal article" date="2005" name="J. Bacteriol.">
        <title>Insights on evolution of virulence and resistance from the complete genome analysis of an early methicillin-resistant Staphylococcus aureus strain and a biofilm-producing methicillin-resistant Staphylococcus epidermidis strain.</title>
        <authorList>
            <person name="Gill S.R."/>
            <person name="Fouts D.E."/>
            <person name="Archer G.L."/>
            <person name="Mongodin E.F."/>
            <person name="DeBoy R.T."/>
            <person name="Ravel J."/>
            <person name="Paulsen I.T."/>
            <person name="Kolonay J.F."/>
            <person name="Brinkac L.M."/>
            <person name="Beanan M.J."/>
            <person name="Dodson R.J."/>
            <person name="Daugherty S.C."/>
            <person name="Madupu R."/>
            <person name="Angiuoli S.V."/>
            <person name="Durkin A.S."/>
            <person name="Haft D.H."/>
            <person name="Vamathevan J.J."/>
            <person name="Khouri H."/>
            <person name="Utterback T.R."/>
            <person name="Lee C."/>
            <person name="Dimitrov G."/>
            <person name="Jiang L."/>
            <person name="Qin H."/>
            <person name="Weidman J."/>
            <person name="Tran K."/>
            <person name="Kang K.H."/>
            <person name="Hance I.R."/>
            <person name="Nelson K.E."/>
            <person name="Fraser C.M."/>
        </authorList>
    </citation>
    <scope>NUCLEOTIDE SEQUENCE [LARGE SCALE GENOMIC DNA]</scope>
    <source>
        <strain>COL</strain>
    </source>
</reference>
<accession>Q5HFH5</accession>
<keyword id="KW-0687">Ribonucleoprotein</keyword>
<keyword id="KW-0689">Ribosomal protein</keyword>
<keyword id="KW-0694">RNA-binding</keyword>
<keyword id="KW-0699">rRNA-binding</keyword>
<name>RS20_STAAC</name>
<proteinExistence type="inferred from homology"/>
<protein>
    <recommendedName>
        <fullName evidence="1">Small ribosomal subunit protein bS20</fullName>
    </recommendedName>
    <alternativeName>
        <fullName evidence="2">30S ribosomal protein S20</fullName>
    </alternativeName>
</protein>
<gene>
    <name evidence="1" type="primary">rpsT</name>
    <name type="ordered locus">SACOL1642</name>
</gene>
<dbReference type="EMBL" id="CP000046">
    <property type="protein sequence ID" value="AAW38258.1"/>
    <property type="molecule type" value="Genomic_DNA"/>
</dbReference>
<dbReference type="RefSeq" id="WP_001274017.1">
    <property type="nucleotide sequence ID" value="NZ_JBGOFO010000003.1"/>
</dbReference>
<dbReference type="SMR" id="Q5HFH5"/>
<dbReference type="GeneID" id="66839775"/>
<dbReference type="KEGG" id="sac:SACOL1642"/>
<dbReference type="HOGENOM" id="CLU_160655_1_1_9"/>
<dbReference type="Proteomes" id="UP000000530">
    <property type="component" value="Chromosome"/>
</dbReference>
<dbReference type="GO" id="GO:0005829">
    <property type="term" value="C:cytosol"/>
    <property type="evidence" value="ECO:0007669"/>
    <property type="project" value="TreeGrafter"/>
</dbReference>
<dbReference type="GO" id="GO:0015935">
    <property type="term" value="C:small ribosomal subunit"/>
    <property type="evidence" value="ECO:0007669"/>
    <property type="project" value="TreeGrafter"/>
</dbReference>
<dbReference type="GO" id="GO:0070181">
    <property type="term" value="F:small ribosomal subunit rRNA binding"/>
    <property type="evidence" value="ECO:0007669"/>
    <property type="project" value="TreeGrafter"/>
</dbReference>
<dbReference type="GO" id="GO:0003735">
    <property type="term" value="F:structural constituent of ribosome"/>
    <property type="evidence" value="ECO:0007669"/>
    <property type="project" value="InterPro"/>
</dbReference>
<dbReference type="GO" id="GO:0006412">
    <property type="term" value="P:translation"/>
    <property type="evidence" value="ECO:0007669"/>
    <property type="project" value="UniProtKB-UniRule"/>
</dbReference>
<dbReference type="Gene3D" id="1.20.58.110">
    <property type="entry name" value="Ribosomal protein S20"/>
    <property type="match status" value="1"/>
</dbReference>
<dbReference type="HAMAP" id="MF_00500">
    <property type="entry name" value="Ribosomal_bS20"/>
    <property type="match status" value="1"/>
</dbReference>
<dbReference type="InterPro" id="IPR002583">
    <property type="entry name" value="Ribosomal_bS20"/>
</dbReference>
<dbReference type="InterPro" id="IPR036510">
    <property type="entry name" value="Ribosomal_bS20_sf"/>
</dbReference>
<dbReference type="NCBIfam" id="TIGR00029">
    <property type="entry name" value="S20"/>
    <property type="match status" value="1"/>
</dbReference>
<dbReference type="PANTHER" id="PTHR33398">
    <property type="entry name" value="30S RIBOSOMAL PROTEIN S20"/>
    <property type="match status" value="1"/>
</dbReference>
<dbReference type="PANTHER" id="PTHR33398:SF1">
    <property type="entry name" value="SMALL RIBOSOMAL SUBUNIT PROTEIN BS20C"/>
    <property type="match status" value="1"/>
</dbReference>
<dbReference type="Pfam" id="PF01649">
    <property type="entry name" value="Ribosomal_S20p"/>
    <property type="match status" value="1"/>
</dbReference>
<dbReference type="SUPFAM" id="SSF46992">
    <property type="entry name" value="Ribosomal protein S20"/>
    <property type="match status" value="1"/>
</dbReference>
<evidence type="ECO:0000255" key="1">
    <source>
        <dbReference type="HAMAP-Rule" id="MF_00500"/>
    </source>
</evidence>
<evidence type="ECO:0000305" key="2"/>
<sequence length="83" mass="9021">MANIKSAIKRVKTTEKAEARNISQKSAMRTAVKNAKTAVSNNADNKNELVSLAVKLVDKAAQSNLIHSNKADRIKSQLMTANK</sequence>
<feature type="chain" id="PRO_0000224946" description="Small ribosomal subunit protein bS20">
    <location>
        <begin position="1"/>
        <end position="83"/>
    </location>
</feature>
<comment type="function">
    <text evidence="1">Binds directly to 16S ribosomal RNA.</text>
</comment>
<comment type="similarity">
    <text evidence="1">Belongs to the bacterial ribosomal protein bS20 family.</text>
</comment>
<organism>
    <name type="scientific">Staphylococcus aureus (strain COL)</name>
    <dbReference type="NCBI Taxonomy" id="93062"/>
    <lineage>
        <taxon>Bacteria</taxon>
        <taxon>Bacillati</taxon>
        <taxon>Bacillota</taxon>
        <taxon>Bacilli</taxon>
        <taxon>Bacillales</taxon>
        <taxon>Staphylococcaceae</taxon>
        <taxon>Staphylococcus</taxon>
    </lineage>
</organism>